<accession>P22963</accession>
<name>AMT4_ROSSA</name>
<keyword id="KW-0002">3D-structure</keyword>
<keyword id="KW-0106">Calcium</keyword>
<keyword id="KW-0119">Carbohydrate metabolism</keyword>
<keyword id="KW-1015">Disulfide bond</keyword>
<keyword id="KW-0326">Glycosidase</keyword>
<keyword id="KW-0378">Hydrolase</keyword>
<keyword id="KW-0479">Metal-binding</keyword>
<keyword id="KW-0964">Secreted</keyword>
<keyword id="KW-0732">Signal</keyword>
<proteinExistence type="evidence at protein level"/>
<reference key="1">
    <citation type="journal article" date="1989" name="FEBS Lett.">
        <title>Nucleotide sequence of the maltotetraohydrolase gene from Pseudomonas saccharophila.</title>
        <authorList>
            <person name="Zhou J."/>
            <person name="Baba T."/>
            <person name="Takano T."/>
            <person name="Kobayashi S."/>
            <person name="Arai Y."/>
        </authorList>
    </citation>
    <scope>NUCLEOTIDE SEQUENCE [GENOMIC DNA]</scope>
    <source>
        <strain>ATCC 15946 / DSM 654 / CCUG 32988 / JCM 15912 / NBRC 103037 / NCIMB 8570 / NRRL B-1492 / IAM 14368</strain>
    </source>
</reference>
<protein>
    <recommendedName>
        <fullName>Glucan 1,4-alpha-maltotetraohydrolase</fullName>
        <shortName>G4-amylase</shortName>
        <ecNumber>3.2.1.60</ecNumber>
    </recommendedName>
    <alternativeName>
        <fullName>Exo-maltotetraohydrolase</fullName>
    </alternativeName>
    <alternativeName>
        <fullName>Maltotetraose-forming amylase</fullName>
    </alternativeName>
    <alternativeName>
        <fullName>Maltotetraose-forming exo-amylase</fullName>
    </alternativeName>
</protein>
<feature type="signal peptide">
    <location>
        <begin position="1"/>
        <end position="21"/>
    </location>
</feature>
<feature type="chain" id="PRO_0000001419" description="Glucan 1,4-alpha-maltotetraohydrolase">
    <location>
        <begin position="22"/>
        <end position="551"/>
    </location>
</feature>
<feature type="domain" description="CBM20" evidence="2">
    <location>
        <begin position="449"/>
        <end position="551"/>
    </location>
</feature>
<feature type="active site" description="Nucleophile" evidence="1">
    <location>
        <position position="214"/>
    </location>
</feature>
<feature type="active site" description="Proton donor" evidence="1">
    <location>
        <position position="240"/>
    </location>
</feature>
<feature type="binding site" evidence="1">
    <location>
        <position position="22"/>
    </location>
    <ligand>
        <name>Ca(2+)</name>
        <dbReference type="ChEBI" id="CHEBI:29108"/>
        <label>1</label>
    </ligand>
</feature>
<feature type="binding site" evidence="1">
    <location>
        <position position="23"/>
    </location>
    <ligand>
        <name>Ca(2+)</name>
        <dbReference type="ChEBI" id="CHEBI:29108"/>
        <label>1</label>
    </ligand>
</feature>
<feature type="binding site" evidence="1">
    <location>
        <position position="34"/>
    </location>
    <ligand>
        <name>Ca(2+)</name>
        <dbReference type="ChEBI" id="CHEBI:29108"/>
        <label>1</label>
    </ligand>
</feature>
<feature type="binding site" evidence="1">
    <location>
        <position position="37"/>
    </location>
    <ligand>
        <name>Ca(2+)</name>
        <dbReference type="ChEBI" id="CHEBI:29108"/>
        <label>1</label>
    </ligand>
</feature>
<feature type="binding site" evidence="1">
    <location>
        <position position="38"/>
    </location>
    <ligand>
        <name>Ca(2+)</name>
        <dbReference type="ChEBI" id="CHEBI:29108"/>
        <label>1</label>
    </ligand>
</feature>
<feature type="binding site" evidence="1">
    <location>
        <begin position="99"/>
        <end position="100"/>
    </location>
    <ligand>
        <name>substrate</name>
    </ligand>
</feature>
<feature type="binding site" evidence="1">
    <location>
        <position position="137"/>
    </location>
    <ligand>
        <name>Ca(2+)</name>
        <dbReference type="ChEBI" id="CHEBI:29108"/>
        <label>2</label>
    </ligand>
</feature>
<feature type="binding site" evidence="1">
    <location>
        <position position="138"/>
    </location>
    <ligand>
        <name>substrate</name>
    </ligand>
</feature>
<feature type="binding site" evidence="1">
    <location>
        <position position="172"/>
    </location>
    <ligand>
        <name>Ca(2+)</name>
        <dbReference type="ChEBI" id="CHEBI:29108"/>
        <label>2</label>
    </ligand>
</feature>
<feature type="binding site" evidence="1">
    <location>
        <position position="175"/>
    </location>
    <ligand>
        <name>Ca(2+)</name>
        <dbReference type="ChEBI" id="CHEBI:29108"/>
        <label>2</label>
    </ligand>
</feature>
<feature type="binding site" evidence="1">
    <location>
        <begin position="177"/>
        <end position="181"/>
    </location>
    <ligand>
        <name>substrate</name>
    </ligand>
</feature>
<feature type="binding site" evidence="1">
    <location>
        <position position="183"/>
    </location>
    <ligand>
        <name>Ca(2+)</name>
        <dbReference type="ChEBI" id="CHEBI:29108"/>
        <label>2</label>
    </ligand>
</feature>
<feature type="binding site" evidence="1">
    <location>
        <position position="212"/>
    </location>
    <ligand>
        <name>substrate</name>
    </ligand>
</feature>
<feature type="binding site" evidence="1">
    <location>
        <position position="218"/>
    </location>
    <ligand>
        <name>Ca(2+)</name>
        <dbReference type="ChEBI" id="CHEBI:29108"/>
        <label>2</label>
    </ligand>
</feature>
<feature type="binding site" evidence="1">
    <location>
        <position position="314"/>
    </location>
    <ligand>
        <name>substrate</name>
    </ligand>
</feature>
<feature type="binding site" evidence="1">
    <location>
        <position position="326"/>
    </location>
    <ligand>
        <name>substrate</name>
    </ligand>
</feature>
<feature type="site" description="Transition state stabilizer" evidence="1">
    <location>
        <position position="315"/>
    </location>
</feature>
<feature type="disulfide bond" evidence="1">
    <location>
        <begin position="161"/>
        <end position="171"/>
    </location>
</feature>
<feature type="disulfide bond" evidence="1">
    <location>
        <begin position="237"/>
        <end position="272"/>
    </location>
</feature>
<feature type="helix" evidence="5">
    <location>
        <begin position="34"/>
        <end position="36"/>
    </location>
</feature>
<feature type="strand" evidence="5">
    <location>
        <begin position="40"/>
        <end position="42"/>
    </location>
</feature>
<feature type="helix" evidence="5">
    <location>
        <begin position="48"/>
        <end position="51"/>
    </location>
</feature>
<feature type="turn" evidence="5">
    <location>
        <begin position="53"/>
        <end position="55"/>
    </location>
</feature>
<feature type="helix" evidence="5">
    <location>
        <begin position="56"/>
        <end position="69"/>
    </location>
</feature>
<feature type="strand" evidence="5">
    <location>
        <begin position="73"/>
        <end position="77"/>
    </location>
</feature>
<feature type="strand" evidence="4">
    <location>
        <begin position="102"/>
        <end position="104"/>
    </location>
</feature>
<feature type="helix" evidence="5">
    <location>
        <begin position="113"/>
        <end position="125"/>
    </location>
</feature>
<feature type="strand" evidence="5">
    <location>
        <begin position="129"/>
        <end position="134"/>
    </location>
</feature>
<feature type="strand" evidence="5">
    <location>
        <begin position="152"/>
        <end position="155"/>
    </location>
</feature>
<feature type="helix" evidence="5">
    <location>
        <begin position="158"/>
        <end position="160"/>
    </location>
</feature>
<feature type="strand" evidence="5">
    <location>
        <begin position="165"/>
        <end position="167"/>
    </location>
</feature>
<feature type="strand" evidence="5">
    <location>
        <begin position="172"/>
        <end position="174"/>
    </location>
</feature>
<feature type="helix" evidence="5">
    <location>
        <begin position="189"/>
        <end position="203"/>
    </location>
</feature>
<feature type="turn" evidence="5">
    <location>
        <begin position="204"/>
        <end position="206"/>
    </location>
</feature>
<feature type="strand" evidence="5">
    <location>
        <begin position="208"/>
        <end position="214"/>
    </location>
</feature>
<feature type="helix" evidence="5">
    <location>
        <begin position="216"/>
        <end position="218"/>
    </location>
</feature>
<feature type="helix" evidence="5">
    <location>
        <begin position="221"/>
        <end position="231"/>
    </location>
</feature>
<feature type="strand" evidence="5">
    <location>
        <begin position="235"/>
        <end position="239"/>
    </location>
</feature>
<feature type="helix" evidence="5">
    <location>
        <begin position="245"/>
        <end position="247"/>
    </location>
</feature>
<feature type="helix" evidence="5">
    <location>
        <begin position="253"/>
        <end position="256"/>
    </location>
</feature>
<feature type="helix" evidence="5">
    <location>
        <begin position="259"/>
        <end position="270"/>
    </location>
</feature>
<feature type="helix" evidence="5">
    <location>
        <begin position="277"/>
        <end position="285"/>
    </location>
</feature>
<feature type="helix" evidence="5">
    <location>
        <begin position="288"/>
        <end position="293"/>
    </location>
</feature>
<feature type="helix" evidence="5">
    <location>
        <begin position="295"/>
        <end position="297"/>
    </location>
</feature>
<feature type="helix" evidence="5">
    <location>
        <begin position="301"/>
        <end position="304"/>
    </location>
</feature>
<feature type="strand" evidence="5">
    <location>
        <begin position="307"/>
        <end position="311"/>
    </location>
</feature>
<feature type="turn" evidence="5">
    <location>
        <begin position="314"/>
        <end position="316"/>
    </location>
</feature>
<feature type="helix" evidence="5">
    <location>
        <begin position="322"/>
        <end position="324"/>
    </location>
</feature>
<feature type="helix" evidence="5">
    <location>
        <begin position="333"/>
        <end position="335"/>
    </location>
</feature>
<feature type="helix" evidence="5">
    <location>
        <begin position="336"/>
        <end position="345"/>
    </location>
</feature>
<feature type="strand" evidence="5">
    <location>
        <begin position="346"/>
        <end position="353"/>
    </location>
</feature>
<feature type="helix" evidence="5">
    <location>
        <begin position="354"/>
        <end position="358"/>
    </location>
</feature>
<feature type="helix" evidence="5">
    <location>
        <begin position="363"/>
        <end position="376"/>
    </location>
</feature>
<feature type="strand" evidence="5">
    <location>
        <begin position="383"/>
        <end position="386"/>
    </location>
</feature>
<feature type="strand" evidence="5">
    <location>
        <begin position="389"/>
        <end position="398"/>
    </location>
</feature>
<feature type="strand" evidence="5">
    <location>
        <begin position="403"/>
        <end position="409"/>
    </location>
</feature>
<feature type="helix" evidence="5">
    <location>
        <begin position="415"/>
        <end position="417"/>
    </location>
</feature>
<feature type="strand" evidence="5">
    <location>
        <begin position="424"/>
        <end position="429"/>
    </location>
</feature>
<feature type="turn" evidence="5">
    <location>
        <begin position="430"/>
        <end position="433"/>
    </location>
</feature>
<feature type="strand" evidence="5">
    <location>
        <begin position="434"/>
        <end position="438"/>
    </location>
</feature>
<feature type="strand" evidence="6">
    <location>
        <begin position="456"/>
        <end position="462"/>
    </location>
</feature>
<feature type="strand" evidence="6">
    <location>
        <begin position="470"/>
        <end position="478"/>
    </location>
</feature>
<feature type="helix" evidence="6">
    <location>
        <begin position="479"/>
        <end position="484"/>
    </location>
</feature>
<feature type="helix" evidence="6">
    <location>
        <begin position="486"/>
        <end position="488"/>
    </location>
</feature>
<feature type="strand" evidence="6">
    <location>
        <begin position="494"/>
        <end position="497"/>
    </location>
</feature>
<feature type="strand" evidence="6">
    <location>
        <begin position="500"/>
        <end position="506"/>
    </location>
</feature>
<feature type="strand" evidence="6">
    <location>
        <begin position="512"/>
        <end position="524"/>
    </location>
</feature>
<feature type="strand" evidence="6">
    <location>
        <begin position="528"/>
        <end position="531"/>
    </location>
</feature>
<feature type="strand" evidence="6">
    <location>
        <begin position="537"/>
        <end position="540"/>
    </location>
</feature>
<feature type="strand" evidence="6">
    <location>
        <begin position="546"/>
        <end position="550"/>
    </location>
</feature>
<organism>
    <name type="scientific">Roseateles saccharophilus</name>
    <name type="common">Pseudomonas saccharophila</name>
    <dbReference type="NCBI Taxonomy" id="304"/>
    <lineage>
        <taxon>Bacteria</taxon>
        <taxon>Pseudomonadati</taxon>
        <taxon>Pseudomonadota</taxon>
        <taxon>Betaproteobacteria</taxon>
        <taxon>Burkholderiales</taxon>
        <taxon>Sphaerotilaceae</taxon>
        <taxon>Roseateles</taxon>
    </lineage>
</organism>
<evidence type="ECO:0000250" key="1"/>
<evidence type="ECO:0000255" key="2">
    <source>
        <dbReference type="PROSITE-ProRule" id="PRU00594"/>
    </source>
</evidence>
<evidence type="ECO:0000305" key="3"/>
<evidence type="ECO:0007829" key="4">
    <source>
        <dbReference type="PDB" id="6IWK"/>
    </source>
</evidence>
<evidence type="ECO:0007829" key="5">
    <source>
        <dbReference type="PDB" id="6JQB"/>
    </source>
</evidence>
<evidence type="ECO:0007829" key="6">
    <source>
        <dbReference type="PDB" id="7CZJ"/>
    </source>
</evidence>
<sequence length="551" mass="59898">MSHILRAAVLAAVLLPFPALADQAGKSPAGVRYHGGDEIILQGFHWNVVREAPNDWYNILRQQASTIAADGFSAIWMPVPWRDFSSWTDGGKSGGGEGYFWHDFNKNGRYGSDAQLRQAAGALGGAGVKVLYDVVPNHMNRGYPDKEINLPAGQGFWRNDCADPGNYPNDCDDGDRFIGGESDLNTGHPQIYGMFRDELANLRSGYGAGGFRFDFVRGYAPERVDSWMSDSADSSFCVGELWKGPSEYPSWDWRNTASWQQIIKDWSDRAKCPVFDFALKERMQNGSVADWKHGLNGNPDPRWREVAVTFVDNHDTGYSPGQNGGQHHWALQDGLIRQAYAYILTSPGTPVVYWSHMYDWGYGDFIRQLIQVRRTAGVRADSAISFHSGYSGLVATVSGSQQTLVVALNSDLANPGQVASGSFSEAVNASNGQVRVWRSGSGDGGGNDGGEGGLVNVNFRCDNGVTQMGDSVYAVGNVSQLGNWSPASAVRLTDTSSYPTWKGSIALPDGQNVEWKCLIRNEADATLVRQWQSGGNNQVQAAAGASTSGSF</sequence>
<gene>
    <name type="primary">mta</name>
</gene>
<dbReference type="EC" id="3.2.1.60"/>
<dbReference type="EMBL" id="X16732">
    <property type="protein sequence ID" value="CAA34708.1"/>
    <property type="molecule type" value="Genomic_DNA"/>
</dbReference>
<dbReference type="PIR" id="S05667">
    <property type="entry name" value="S05667"/>
</dbReference>
<dbReference type="PDB" id="6IWK">
    <property type="method" value="X-ray"/>
    <property type="resolution" value="1.50 A"/>
    <property type="chains" value="A=22-439"/>
</dbReference>
<dbReference type="PDB" id="6IYG">
    <property type="method" value="X-ray"/>
    <property type="resolution" value="1.50 A"/>
    <property type="chains" value="A=22-551"/>
</dbReference>
<dbReference type="PDB" id="6J3X">
    <property type="method" value="X-ray"/>
    <property type="resolution" value="1.62 A"/>
    <property type="chains" value="A=22-551"/>
</dbReference>
<dbReference type="PDB" id="6JQB">
    <property type="method" value="X-ray"/>
    <property type="resolution" value="1.10 A"/>
    <property type="chains" value="A=22-551"/>
</dbReference>
<dbReference type="PDB" id="7CZJ">
    <property type="method" value="X-ray"/>
    <property type="resolution" value="1.50 A"/>
    <property type="chains" value="A/B=455-551"/>
</dbReference>
<dbReference type="PDBsum" id="6IWK"/>
<dbReference type="PDBsum" id="6IYG"/>
<dbReference type="PDBsum" id="6J3X"/>
<dbReference type="PDBsum" id="6JQB"/>
<dbReference type="PDBsum" id="7CZJ"/>
<dbReference type="SMR" id="P22963"/>
<dbReference type="CAZy" id="CBM20">
    <property type="family name" value="Carbohydrate-Binding Module Family 20"/>
</dbReference>
<dbReference type="CAZy" id="GH13">
    <property type="family name" value="Glycoside Hydrolase Family 13"/>
</dbReference>
<dbReference type="UniPathway" id="UPA00153"/>
<dbReference type="GO" id="GO:0005576">
    <property type="term" value="C:extracellular region"/>
    <property type="evidence" value="ECO:0007669"/>
    <property type="project" value="UniProtKB-SubCell"/>
</dbReference>
<dbReference type="GO" id="GO:0004556">
    <property type="term" value="F:alpha-amylase activity"/>
    <property type="evidence" value="ECO:0007669"/>
    <property type="project" value="InterPro"/>
</dbReference>
<dbReference type="GO" id="GO:0033910">
    <property type="term" value="F:glucan 1,4-alpha-maltotetraohydrolase activity"/>
    <property type="evidence" value="ECO:0007669"/>
    <property type="project" value="UniProtKB-EC"/>
</dbReference>
<dbReference type="GO" id="GO:0046872">
    <property type="term" value="F:metal ion binding"/>
    <property type="evidence" value="ECO:0007669"/>
    <property type="project" value="UniProtKB-KW"/>
</dbReference>
<dbReference type="GO" id="GO:2001070">
    <property type="term" value="F:starch binding"/>
    <property type="evidence" value="ECO:0007669"/>
    <property type="project" value="InterPro"/>
</dbReference>
<dbReference type="GO" id="GO:0005983">
    <property type="term" value="P:starch catabolic process"/>
    <property type="evidence" value="ECO:0007669"/>
    <property type="project" value="UniProtKB-UniPathway"/>
</dbReference>
<dbReference type="CDD" id="cd11314">
    <property type="entry name" value="AmyAc_arch_bac_plant_AmyA"/>
    <property type="match status" value="1"/>
</dbReference>
<dbReference type="CDD" id="cd05810">
    <property type="entry name" value="CBM20_alpha_MTH"/>
    <property type="match status" value="1"/>
</dbReference>
<dbReference type="Gene3D" id="3.20.20.80">
    <property type="entry name" value="Glycosidases"/>
    <property type="match status" value="1"/>
</dbReference>
<dbReference type="Gene3D" id="2.60.40.1180">
    <property type="entry name" value="Golgi alpha-mannosidase II"/>
    <property type="match status" value="1"/>
</dbReference>
<dbReference type="Gene3D" id="2.60.40.10">
    <property type="entry name" value="Immunoglobulins"/>
    <property type="match status" value="1"/>
</dbReference>
<dbReference type="InterPro" id="IPR006046">
    <property type="entry name" value="Alpha_amylase"/>
</dbReference>
<dbReference type="InterPro" id="IPR015165">
    <property type="entry name" value="AMT4_domain_C"/>
</dbReference>
<dbReference type="InterPro" id="IPR013784">
    <property type="entry name" value="Carb-bd-like_fold"/>
</dbReference>
<dbReference type="InterPro" id="IPR002044">
    <property type="entry name" value="CBM20"/>
</dbReference>
<dbReference type="InterPro" id="IPR006047">
    <property type="entry name" value="Glyco_hydro_13_cat_dom"/>
</dbReference>
<dbReference type="InterPro" id="IPR013780">
    <property type="entry name" value="Glyco_hydro_b"/>
</dbReference>
<dbReference type="InterPro" id="IPR017853">
    <property type="entry name" value="Glycoside_hydrolase_SF"/>
</dbReference>
<dbReference type="InterPro" id="IPR013783">
    <property type="entry name" value="Ig-like_fold"/>
</dbReference>
<dbReference type="PANTHER" id="PTHR43447">
    <property type="entry name" value="ALPHA-AMYLASE"/>
    <property type="match status" value="1"/>
</dbReference>
<dbReference type="Pfam" id="PF09081">
    <property type="entry name" value="AMT4_dom_C"/>
    <property type="match status" value="1"/>
</dbReference>
<dbReference type="Pfam" id="PF00686">
    <property type="entry name" value="CBM_20"/>
    <property type="match status" value="1"/>
</dbReference>
<dbReference type="PRINTS" id="PR00110">
    <property type="entry name" value="ALPHAAMYLASE"/>
</dbReference>
<dbReference type="SMART" id="SM00642">
    <property type="entry name" value="Aamy"/>
    <property type="match status" value="1"/>
</dbReference>
<dbReference type="SMART" id="SM01065">
    <property type="entry name" value="CBM_2"/>
    <property type="match status" value="1"/>
</dbReference>
<dbReference type="SUPFAM" id="SSF51445">
    <property type="entry name" value="(Trans)glycosidases"/>
    <property type="match status" value="1"/>
</dbReference>
<dbReference type="SUPFAM" id="SSF51011">
    <property type="entry name" value="Glycosyl hydrolase domain"/>
    <property type="match status" value="1"/>
</dbReference>
<dbReference type="SUPFAM" id="SSF49452">
    <property type="entry name" value="Starch-binding domain-like"/>
    <property type="match status" value="1"/>
</dbReference>
<dbReference type="PROSITE" id="PS51166">
    <property type="entry name" value="CBM20"/>
    <property type="match status" value="1"/>
</dbReference>
<comment type="catalytic activity">
    <reaction>
        <text>Hydrolysis of (1-&gt;4)-alpha-D-glucosidic linkages in amylaceous polysaccharides, to remove successive maltotetraose residues from the non-reducing chain ends.</text>
        <dbReference type="EC" id="3.2.1.60"/>
    </reaction>
</comment>
<comment type="cofactor">
    <cofactor evidence="1">
        <name>Ca(2+)</name>
        <dbReference type="ChEBI" id="CHEBI:29108"/>
    </cofactor>
    <text evidence="1">Binds 2 calcium ions per subunit.</text>
</comment>
<comment type="pathway">
    <text>Glycan degradation; starch degradation.</text>
</comment>
<comment type="subunit">
    <text evidence="1">Monomer.</text>
</comment>
<comment type="subcellular location">
    <subcellularLocation>
        <location>Secreted</location>
    </subcellularLocation>
</comment>
<comment type="similarity">
    <text evidence="3">Belongs to the glycosyl hydrolase 13 family.</text>
</comment>